<accession>Q7MN61</accession>
<keyword id="KW-0378">Hydrolase</keyword>
<keyword id="KW-0719">Serine esterase</keyword>
<gene>
    <name evidence="1" type="primary">frsA</name>
    <name type="ordered locus">VV0856</name>
</gene>
<name>FRSA_VIBVY</name>
<protein>
    <recommendedName>
        <fullName evidence="1">Esterase FrsA</fullName>
        <ecNumber evidence="1">3.1.1.1</ecNumber>
    </recommendedName>
</protein>
<evidence type="ECO:0000255" key="1">
    <source>
        <dbReference type="HAMAP-Rule" id="MF_01063"/>
    </source>
</evidence>
<evidence type="ECO:0000305" key="2"/>
<sequence length="415" mass="47013">MSEEVSKNLSETLFVKHKQAKETSALTQYMPTSQSLLDEIKEKNGFSWYRNLRRLQWVWQGVDPIEQEQVLARIASSKHSRTDEQWLDTVMGYHSGNWAYEWTRLGMEHQKRAGEMTNEAASEALFSASLCYSIAGYPHLKSDNLAIQAQVLANSAYLEAAKKSKYIIKQLEIPFEKGKITAHLHLTNTDKPHPVVIVSAGLDSLQTDMWRLFRDHLAKHDIAMLTVDMPSVGYSSKYPLTEDYSRLHQAVLNELFSIPYVDHHRVGLIGFRFGGNAMVRLSFLEQEKIKACVILGAPIHDIFASPQKLQQMPKMYLDVLASRLGKSVVDIYSLSGQMAAWSLKVQGFLSSRKTKVPILAMSLEGDPVSPYSDNQMVAFFSTYGKAKKISSKTITQGYEQSLDLAIKWLEDELLR</sequence>
<dbReference type="EC" id="3.1.1.1" evidence="1"/>
<dbReference type="EMBL" id="BA000037">
    <property type="protein sequence ID" value="BAC93620.1"/>
    <property type="status" value="ALT_INIT"/>
    <property type="molecule type" value="Genomic_DNA"/>
</dbReference>
<dbReference type="RefSeq" id="WP_011078432.1">
    <property type="nucleotide sequence ID" value="NC_005139.1"/>
</dbReference>
<dbReference type="SMR" id="Q7MN61"/>
<dbReference type="STRING" id="672.VV93_v1c07950"/>
<dbReference type="ESTHER" id="vibvy-y856">
    <property type="family name" value="Duf_1100-R"/>
</dbReference>
<dbReference type="KEGG" id="vvy:VV0856"/>
<dbReference type="eggNOG" id="COG1073">
    <property type="taxonomic scope" value="Bacteria"/>
</dbReference>
<dbReference type="HOGENOM" id="CLU_036819_0_0_6"/>
<dbReference type="Proteomes" id="UP000002675">
    <property type="component" value="Chromosome I"/>
</dbReference>
<dbReference type="GO" id="GO:0106435">
    <property type="term" value="F:carboxylesterase activity"/>
    <property type="evidence" value="ECO:0007669"/>
    <property type="project" value="UniProtKB-EC"/>
</dbReference>
<dbReference type="Gene3D" id="3.40.50.1820">
    <property type="entry name" value="alpha/beta hydrolase"/>
    <property type="match status" value="1"/>
</dbReference>
<dbReference type="HAMAP" id="MF_01063">
    <property type="entry name" value="FrsA"/>
    <property type="match status" value="1"/>
</dbReference>
<dbReference type="InterPro" id="IPR029058">
    <property type="entry name" value="AB_hydrolase_fold"/>
</dbReference>
<dbReference type="InterPro" id="IPR043423">
    <property type="entry name" value="FrsA"/>
</dbReference>
<dbReference type="InterPro" id="IPR010520">
    <property type="entry name" value="FrsA-like"/>
</dbReference>
<dbReference type="InterPro" id="IPR050261">
    <property type="entry name" value="FrsA_esterase"/>
</dbReference>
<dbReference type="NCBIfam" id="NF003460">
    <property type="entry name" value="PRK05077.1"/>
    <property type="match status" value="1"/>
</dbReference>
<dbReference type="PANTHER" id="PTHR22946">
    <property type="entry name" value="DIENELACTONE HYDROLASE DOMAIN-CONTAINING PROTEIN-RELATED"/>
    <property type="match status" value="1"/>
</dbReference>
<dbReference type="PANTHER" id="PTHR22946:SF4">
    <property type="entry name" value="ESTERASE FRSA"/>
    <property type="match status" value="1"/>
</dbReference>
<dbReference type="Pfam" id="PF06500">
    <property type="entry name" value="FrsA-like"/>
    <property type="match status" value="1"/>
</dbReference>
<dbReference type="SUPFAM" id="SSF53474">
    <property type="entry name" value="alpha/beta-Hydrolases"/>
    <property type="match status" value="1"/>
</dbReference>
<comment type="function">
    <text evidence="1">Catalyzes the hydrolysis of esters.</text>
</comment>
<comment type="catalytic activity">
    <reaction evidence="1">
        <text>a carboxylic ester + H2O = an alcohol + a carboxylate + H(+)</text>
        <dbReference type="Rhea" id="RHEA:21164"/>
        <dbReference type="ChEBI" id="CHEBI:15377"/>
        <dbReference type="ChEBI" id="CHEBI:15378"/>
        <dbReference type="ChEBI" id="CHEBI:29067"/>
        <dbReference type="ChEBI" id="CHEBI:30879"/>
        <dbReference type="ChEBI" id="CHEBI:33308"/>
        <dbReference type="EC" id="3.1.1.1"/>
    </reaction>
</comment>
<comment type="similarity">
    <text evidence="1">Belongs to the FrsA family.</text>
</comment>
<comment type="sequence caution" evidence="2">
    <conflict type="erroneous initiation">
        <sequence resource="EMBL-CDS" id="BAC93620"/>
    </conflict>
</comment>
<proteinExistence type="inferred from homology"/>
<reference key="1">
    <citation type="journal article" date="2003" name="Genome Res.">
        <title>Comparative genome analysis of Vibrio vulnificus, a marine pathogen.</title>
        <authorList>
            <person name="Chen C.-Y."/>
            <person name="Wu K.-M."/>
            <person name="Chang Y.-C."/>
            <person name="Chang C.-H."/>
            <person name="Tsai H.-C."/>
            <person name="Liao T.-L."/>
            <person name="Liu Y.-M."/>
            <person name="Chen H.-J."/>
            <person name="Shen A.B.-T."/>
            <person name="Li J.-C."/>
            <person name="Su T.-L."/>
            <person name="Shao C.-P."/>
            <person name="Lee C.-T."/>
            <person name="Hor L.-I."/>
            <person name="Tsai S.-F."/>
        </authorList>
    </citation>
    <scope>NUCLEOTIDE SEQUENCE [LARGE SCALE GENOMIC DNA]</scope>
    <source>
        <strain>YJ016</strain>
    </source>
</reference>
<organism>
    <name type="scientific">Vibrio vulnificus (strain YJ016)</name>
    <dbReference type="NCBI Taxonomy" id="196600"/>
    <lineage>
        <taxon>Bacteria</taxon>
        <taxon>Pseudomonadati</taxon>
        <taxon>Pseudomonadota</taxon>
        <taxon>Gammaproteobacteria</taxon>
        <taxon>Vibrionales</taxon>
        <taxon>Vibrionaceae</taxon>
        <taxon>Vibrio</taxon>
    </lineage>
</organism>
<feature type="chain" id="PRO_0000197162" description="Esterase FrsA">
    <location>
        <begin position="1"/>
        <end position="415"/>
    </location>
</feature>